<gene>
    <name type="primary">hyaB</name>
</gene>
<protein>
    <recommendedName>
        <fullName>Hydrogenase-1 large chain</fullName>
        <shortName>HYD1</shortName>
        <ecNumber>1.12.99.6</ecNumber>
    </recommendedName>
    <alternativeName>
        <fullName>Membrane-bound hydrogenase 1 large subunit</fullName>
    </alternativeName>
    <alternativeName>
        <fullName>NiFe hydrogenase</fullName>
    </alternativeName>
</protein>
<accession>Q46046</accession>
<keyword id="KW-1003">Cell membrane</keyword>
<keyword id="KW-0472">Membrane</keyword>
<keyword id="KW-0479">Metal-binding</keyword>
<keyword id="KW-0533">Nickel</keyword>
<keyword id="KW-0560">Oxidoreductase</keyword>
<reference key="1">
    <citation type="submission" date="1994-03" db="EMBL/GenBank/DDBJ databases">
        <authorList>
            <person name="Yano K."/>
            <person name="Ikebukuro K."/>
            <person name="Tomiyama M."/>
            <person name="Karube I."/>
        </authorList>
    </citation>
    <scope>NUCLEOTIDE SEQUENCE [GENOMIC DNA]</scope>
</reference>
<proteinExistence type="inferred from homology"/>
<feature type="chain" id="PRO_0000199711" description="Hydrogenase-1 large chain">
    <location>
        <begin position="1"/>
        <end position="597"/>
    </location>
</feature>
<feature type="binding site" evidence="2">
    <location>
        <position position="76"/>
    </location>
    <ligand>
        <name>Ni(2+)</name>
        <dbReference type="ChEBI" id="CHEBI:49786"/>
    </ligand>
</feature>
<feature type="binding site" evidence="2">
    <location>
        <position position="79"/>
    </location>
    <ligand>
        <name>Ni(2+)</name>
        <dbReference type="ChEBI" id="CHEBI:49786"/>
    </ligand>
</feature>
<feature type="binding site" evidence="2">
    <location>
        <position position="576"/>
    </location>
    <ligand>
        <name>Ni(2+)</name>
        <dbReference type="ChEBI" id="CHEBI:49786"/>
    </ligand>
</feature>
<feature type="binding site" evidence="2">
    <location>
        <position position="579"/>
    </location>
    <ligand>
        <name>Ni(2+)</name>
        <dbReference type="ChEBI" id="CHEBI:49786"/>
    </ligand>
</feature>
<dbReference type="EC" id="1.12.99.6"/>
<dbReference type="EMBL" id="D28594">
    <property type="protein sequence ID" value="BAA05930.1"/>
    <property type="molecule type" value="Genomic_DNA"/>
</dbReference>
<dbReference type="SMR" id="Q46046"/>
<dbReference type="STRING" id="1333848.CFNIH1_11595"/>
<dbReference type="GO" id="GO:0005886">
    <property type="term" value="C:plasma membrane"/>
    <property type="evidence" value="ECO:0007669"/>
    <property type="project" value="UniProtKB-SubCell"/>
</dbReference>
<dbReference type="GO" id="GO:0008901">
    <property type="term" value="F:ferredoxin hydrogenase activity"/>
    <property type="evidence" value="ECO:0007669"/>
    <property type="project" value="InterPro"/>
</dbReference>
<dbReference type="GO" id="GO:0033748">
    <property type="term" value="F:hydrogenase (acceptor) activity"/>
    <property type="evidence" value="ECO:0007669"/>
    <property type="project" value="UniProtKB-EC"/>
</dbReference>
<dbReference type="GO" id="GO:0016151">
    <property type="term" value="F:nickel cation binding"/>
    <property type="evidence" value="ECO:0007669"/>
    <property type="project" value="InterPro"/>
</dbReference>
<dbReference type="FunFam" id="1.10.645.10:FF:000002">
    <property type="entry name" value="Hydrogenase 2 large subunit"/>
    <property type="match status" value="1"/>
</dbReference>
<dbReference type="Gene3D" id="1.10.645.10">
    <property type="entry name" value="Cytochrome-c3 Hydrogenase, chain B"/>
    <property type="match status" value="1"/>
</dbReference>
<dbReference type="InterPro" id="IPR001501">
    <property type="entry name" value="Ni-dep_hyd_lsu"/>
</dbReference>
<dbReference type="InterPro" id="IPR018194">
    <property type="entry name" value="Ni-dep_hyd_lsu_Ni_BS"/>
</dbReference>
<dbReference type="InterPro" id="IPR029014">
    <property type="entry name" value="NiFe-Hase_large"/>
</dbReference>
<dbReference type="InterPro" id="IPR050867">
    <property type="entry name" value="NiFe/NiFeSe_hydrgnase_LSU"/>
</dbReference>
<dbReference type="NCBIfam" id="NF007550">
    <property type="entry name" value="PRK10170.1"/>
    <property type="match status" value="1"/>
</dbReference>
<dbReference type="PANTHER" id="PTHR42958:SF3">
    <property type="entry name" value="HYDROGENASE-1 LARGE CHAIN"/>
    <property type="match status" value="1"/>
</dbReference>
<dbReference type="PANTHER" id="PTHR42958">
    <property type="entry name" value="HYDROGENASE-2 LARGE CHAIN"/>
    <property type="match status" value="1"/>
</dbReference>
<dbReference type="Pfam" id="PF00374">
    <property type="entry name" value="NiFeSe_Hases"/>
    <property type="match status" value="1"/>
</dbReference>
<dbReference type="SUPFAM" id="SSF56762">
    <property type="entry name" value="HydB/Nqo4-like"/>
    <property type="match status" value="1"/>
</dbReference>
<dbReference type="PROSITE" id="PS00507">
    <property type="entry name" value="NI_HGENASE_L_1"/>
    <property type="match status" value="1"/>
</dbReference>
<dbReference type="PROSITE" id="PS00508">
    <property type="entry name" value="NI_HGENASE_L_2"/>
    <property type="match status" value="1"/>
</dbReference>
<organism>
    <name type="scientific">Citrobacter freundii</name>
    <dbReference type="NCBI Taxonomy" id="546"/>
    <lineage>
        <taxon>Bacteria</taxon>
        <taxon>Pseudomonadati</taxon>
        <taxon>Pseudomonadota</taxon>
        <taxon>Gammaproteobacteria</taxon>
        <taxon>Enterobacterales</taxon>
        <taxon>Enterobacteriaceae</taxon>
        <taxon>Citrobacter</taxon>
        <taxon>Citrobacter freundii complex</taxon>
    </lineage>
</organism>
<sequence length="597" mass="66391">MSNSYQTQGYTVNNAGRRLVVDPITRIEGHMRCEVNIDEQNIITNAVSCGTMFRGLEIILQGRDPRDAWAFVERICGVCTGVHALASVYAIEDAIGIKVPDNANIIRNIMLATLWCHDHLVHFYQLAGMDWIDVLNALKADPRATSQLAQSLSAWPMSSPGYFFDVQNRLKKFVDGGQLGIFRNGYWGHPQYKLSPEANLMGFAHYLEALDFQREIIKIHTVFGGKNPHPNWIVGGMPCAINIDQSGAVGAVDMERLNLVQSIITRTADFINNVMVPDALAIGQFNKPWSQIGTGLSDKCVLSYGAFPDIANDFSAKSLLMPGGAVINGDFNNVMPVDLADQQQIQEFVDHAWYRYPDDQLGRHPFEGITEPWYNPGDVKGSDTDIQQLNEQERYSWIKAPRWRGHAMEVGPLARTLIAYHKGDAATIESVDRMMSALKLPLSGMQSTLGRILCRAHEAQWAVSKLQYFFDKLMTNLKNGNLATANTEKWEPASWPQQCRGIGFTEAPRGALGHWASIRDQKIDVYQCVVPTTWNASPRDPEGQIGAYEAALMGTQMAIPDQPLEILRTLHSFDPCLACSTHVLGDDGSELIAVQVR</sequence>
<comment type="catalytic activity">
    <reaction>
        <text>H2 + A = AH2</text>
        <dbReference type="Rhea" id="RHEA:12116"/>
        <dbReference type="ChEBI" id="CHEBI:13193"/>
        <dbReference type="ChEBI" id="CHEBI:17499"/>
        <dbReference type="ChEBI" id="CHEBI:18276"/>
        <dbReference type="EC" id="1.12.99.6"/>
    </reaction>
</comment>
<comment type="cofactor">
    <cofactor evidence="1">
        <name>Ni(2+)</name>
        <dbReference type="ChEBI" id="CHEBI:49786"/>
    </cofactor>
    <text evidence="1">Binds 1 nickel ion per subunit.</text>
</comment>
<comment type="subunit">
    <text>Heterodimer of a large and a small subunit.</text>
</comment>
<comment type="subcellular location">
    <subcellularLocation>
        <location>Cell membrane</location>
        <topology>Peripheral membrane protein</topology>
    </subcellularLocation>
</comment>
<comment type="similarity">
    <text evidence="3">Belongs to the [NiFe]/[NiFeSe] hydrogenase large subunit family.</text>
</comment>
<name>MBHL_CITFR</name>
<evidence type="ECO:0000250" key="1"/>
<evidence type="ECO:0000255" key="2"/>
<evidence type="ECO:0000305" key="3"/>